<evidence type="ECO:0000250" key="1"/>
<evidence type="ECO:0000255" key="2"/>
<evidence type="ECO:0000255" key="3">
    <source>
        <dbReference type="PROSITE-ProRule" id="PRU00042"/>
    </source>
</evidence>
<evidence type="ECO:0000256" key="4">
    <source>
        <dbReference type="SAM" id="MobiDB-lite"/>
    </source>
</evidence>
<evidence type="ECO:0000269" key="5">
    <source>
    </source>
</evidence>
<evidence type="ECO:0000269" key="6">
    <source>
    </source>
</evidence>
<evidence type="ECO:0000269" key="7">
    <source>
    </source>
</evidence>
<evidence type="ECO:0000269" key="8">
    <source>
    </source>
</evidence>
<evidence type="ECO:0000305" key="9"/>
<name>GLIS3_HUMAN</name>
<dbReference type="EMBL" id="AL158012">
    <property type="status" value="NOT_ANNOTATED_CDS"/>
    <property type="molecule type" value="Genomic_DNA"/>
</dbReference>
<dbReference type="EMBL" id="AL133283">
    <property type="status" value="NOT_ANNOTATED_CDS"/>
    <property type="molecule type" value="Genomic_DNA"/>
</dbReference>
<dbReference type="EMBL" id="AL137071">
    <property type="status" value="NOT_ANNOTATED_CDS"/>
    <property type="molecule type" value="Genomic_DNA"/>
</dbReference>
<dbReference type="EMBL" id="BC033899">
    <property type="protein sequence ID" value="AAH33899.2"/>
    <property type="molecule type" value="mRNA"/>
</dbReference>
<dbReference type="EMBL" id="DQ438877">
    <property type="protein sequence ID" value="ABE66434.1"/>
    <property type="molecule type" value="mRNA"/>
</dbReference>
<dbReference type="CCDS" id="CCDS43784.1">
    <molecule id="Q8NEA6-2"/>
</dbReference>
<dbReference type="CCDS" id="CCDS6451.1">
    <molecule id="Q8NEA6-1"/>
</dbReference>
<dbReference type="RefSeq" id="NP_001035878.1">
    <molecule id="Q8NEA6-2"/>
    <property type="nucleotide sequence ID" value="NM_001042413.2"/>
</dbReference>
<dbReference type="RefSeq" id="NP_689842.3">
    <molecule id="Q8NEA6-1"/>
    <property type="nucleotide sequence ID" value="NM_152629.3"/>
</dbReference>
<dbReference type="RefSeq" id="XP_005251443.1">
    <molecule id="Q8NEA6-1"/>
    <property type="nucleotide sequence ID" value="XM_005251386.5"/>
</dbReference>
<dbReference type="RefSeq" id="XP_011516065.1">
    <molecule id="Q8NEA6-2"/>
    <property type="nucleotide sequence ID" value="XM_011517763.3"/>
</dbReference>
<dbReference type="RefSeq" id="XP_011516066.1">
    <molecule id="Q8NEA6-2"/>
    <property type="nucleotide sequence ID" value="XM_011517764.3"/>
</dbReference>
<dbReference type="RefSeq" id="XP_011516068.1">
    <molecule id="Q8NEA6-1"/>
    <property type="nucleotide sequence ID" value="XM_011517766.3"/>
</dbReference>
<dbReference type="RefSeq" id="XP_016869850.1">
    <molecule id="Q8NEA6-1"/>
    <property type="nucleotide sequence ID" value="XM_017014361.2"/>
</dbReference>
<dbReference type="RefSeq" id="XP_047278845.1">
    <molecule id="Q8NEA6-2"/>
    <property type="nucleotide sequence ID" value="XM_047422889.1"/>
</dbReference>
<dbReference type="SMR" id="Q8NEA6"/>
<dbReference type="BioGRID" id="127988">
    <property type="interactions" value="34"/>
</dbReference>
<dbReference type="CORUM" id="Q8NEA6"/>
<dbReference type="FunCoup" id="Q8NEA6">
    <property type="interactions" value="1159"/>
</dbReference>
<dbReference type="IntAct" id="Q8NEA6">
    <property type="interactions" value="12"/>
</dbReference>
<dbReference type="MINT" id="Q8NEA6"/>
<dbReference type="STRING" id="9606.ENSP00000371398"/>
<dbReference type="iPTMnet" id="Q8NEA6"/>
<dbReference type="PhosphoSitePlus" id="Q8NEA6"/>
<dbReference type="BioMuta" id="GLIS3"/>
<dbReference type="DMDM" id="322510143"/>
<dbReference type="jPOST" id="Q8NEA6"/>
<dbReference type="MassIVE" id="Q8NEA6"/>
<dbReference type="PaxDb" id="9606-ENSP00000371398"/>
<dbReference type="PeptideAtlas" id="Q8NEA6"/>
<dbReference type="ProteomicsDB" id="73140">
    <molecule id="Q8NEA6-1"/>
</dbReference>
<dbReference type="ProteomicsDB" id="73141">
    <molecule id="Q8NEA6-2"/>
</dbReference>
<dbReference type="Antibodypedia" id="23977">
    <property type="antibodies" value="102 antibodies from 22 providers"/>
</dbReference>
<dbReference type="DNASU" id="169792"/>
<dbReference type="Ensembl" id="ENST00000324333.14">
    <molecule id="Q8NEA6-1"/>
    <property type="protein sequence ID" value="ENSP00000325494.10"/>
    <property type="gene ID" value="ENSG00000107249.24"/>
</dbReference>
<dbReference type="Ensembl" id="ENST00000381971.8">
    <molecule id="Q8NEA6-2"/>
    <property type="protein sequence ID" value="ENSP00000371398.3"/>
    <property type="gene ID" value="ENSG00000107249.24"/>
</dbReference>
<dbReference type="Ensembl" id="ENST00000682749.1">
    <molecule id="Q8NEA6-1"/>
    <property type="protein sequence ID" value="ENSP00000507306.1"/>
    <property type="gene ID" value="ENSG00000107249.24"/>
</dbReference>
<dbReference type="GeneID" id="169792"/>
<dbReference type="KEGG" id="hsa:169792"/>
<dbReference type="MANE-Select" id="ENST00000381971.8">
    <molecule id="Q8NEA6-2"/>
    <property type="protein sequence ID" value="ENSP00000371398.3"/>
    <property type="RefSeq nucleotide sequence ID" value="NM_001042413.2"/>
    <property type="RefSeq protein sequence ID" value="NP_001035878.1"/>
</dbReference>
<dbReference type="UCSC" id="uc003zhw.2">
    <molecule id="Q8NEA6-1"/>
    <property type="organism name" value="human"/>
</dbReference>
<dbReference type="AGR" id="HGNC:28510"/>
<dbReference type="CTD" id="169792"/>
<dbReference type="DisGeNET" id="169792"/>
<dbReference type="GeneCards" id="GLIS3"/>
<dbReference type="GeneReviews" id="GLIS3"/>
<dbReference type="HGNC" id="HGNC:28510">
    <property type="gene designation" value="GLIS3"/>
</dbReference>
<dbReference type="HPA" id="ENSG00000107249">
    <property type="expression patterns" value="Tissue enhanced (thyroid)"/>
</dbReference>
<dbReference type="MalaCards" id="GLIS3"/>
<dbReference type="MIM" id="610192">
    <property type="type" value="gene"/>
</dbReference>
<dbReference type="MIM" id="610199">
    <property type="type" value="phenotype"/>
</dbReference>
<dbReference type="neXtProt" id="NX_Q8NEA6"/>
<dbReference type="OpenTargets" id="ENSG00000107249"/>
<dbReference type="Orphanet" id="79118">
    <property type="disease" value="Neonatal diabetes-congenital hypothyroidism-congenital glaucoma-hepatic fibrosis-polycystic kidneys syndrome"/>
</dbReference>
<dbReference type="PharmGKB" id="PA134878768"/>
<dbReference type="VEuPathDB" id="HostDB:ENSG00000107249"/>
<dbReference type="eggNOG" id="KOG1721">
    <property type="taxonomic scope" value="Eukaryota"/>
</dbReference>
<dbReference type="GeneTree" id="ENSGT00940000156896"/>
<dbReference type="HOGENOM" id="CLU_014147_1_0_1"/>
<dbReference type="InParanoid" id="Q8NEA6"/>
<dbReference type="OMA" id="SECGRMQ"/>
<dbReference type="OrthoDB" id="3437960at2759"/>
<dbReference type="PAN-GO" id="Q8NEA6">
    <property type="GO annotations" value="4 GO annotations based on evolutionary models"/>
</dbReference>
<dbReference type="PhylomeDB" id="Q8NEA6"/>
<dbReference type="TreeFam" id="TF350216"/>
<dbReference type="PathwayCommons" id="Q8NEA6"/>
<dbReference type="SignaLink" id="Q8NEA6"/>
<dbReference type="SIGNOR" id="Q8NEA6"/>
<dbReference type="BioGRID-ORCS" id="169792">
    <property type="hits" value="17 hits in 1180 CRISPR screens"/>
</dbReference>
<dbReference type="ChiTaRS" id="GLIS3">
    <property type="organism name" value="human"/>
</dbReference>
<dbReference type="GenomeRNAi" id="169792"/>
<dbReference type="Pharos" id="Q8NEA6">
    <property type="development level" value="Tbio"/>
</dbReference>
<dbReference type="PRO" id="PR:Q8NEA6"/>
<dbReference type="Proteomes" id="UP000005640">
    <property type="component" value="Chromosome 9"/>
</dbReference>
<dbReference type="RNAct" id="Q8NEA6">
    <property type="molecule type" value="protein"/>
</dbReference>
<dbReference type="Bgee" id="ENSG00000107249">
    <property type="expression patterns" value="Expressed in buccal mucosa cell and 154 other cell types or tissues"/>
</dbReference>
<dbReference type="ExpressionAtlas" id="Q8NEA6">
    <property type="expression patterns" value="baseline and differential"/>
</dbReference>
<dbReference type="GO" id="GO:0005634">
    <property type="term" value="C:nucleus"/>
    <property type="evidence" value="ECO:0000250"/>
    <property type="project" value="UniProtKB"/>
</dbReference>
<dbReference type="GO" id="GO:0001228">
    <property type="term" value="F:DNA-binding transcription activator activity, RNA polymerase II-specific"/>
    <property type="evidence" value="ECO:0000250"/>
    <property type="project" value="BHF-UCL"/>
</dbReference>
<dbReference type="GO" id="GO:0000981">
    <property type="term" value="F:DNA-binding transcription factor activity, RNA polymerase II-specific"/>
    <property type="evidence" value="ECO:0000318"/>
    <property type="project" value="GO_Central"/>
</dbReference>
<dbReference type="GO" id="GO:0001227">
    <property type="term" value="F:DNA-binding transcription repressor activity, RNA polymerase II-specific"/>
    <property type="evidence" value="ECO:0000250"/>
    <property type="project" value="BHF-UCL"/>
</dbReference>
<dbReference type="GO" id="GO:0000978">
    <property type="term" value="F:RNA polymerase II cis-regulatory region sequence-specific DNA binding"/>
    <property type="evidence" value="ECO:0000250"/>
    <property type="project" value="BHF-UCL"/>
</dbReference>
<dbReference type="GO" id="GO:0008270">
    <property type="term" value="F:zinc ion binding"/>
    <property type="evidence" value="ECO:0007669"/>
    <property type="project" value="UniProtKB-KW"/>
</dbReference>
<dbReference type="GO" id="GO:0000122">
    <property type="term" value="P:negative regulation of transcription by RNA polymerase II"/>
    <property type="evidence" value="ECO:0000250"/>
    <property type="project" value="UniProtKB"/>
</dbReference>
<dbReference type="GO" id="GO:0045944">
    <property type="term" value="P:positive regulation of transcription by RNA polymerase II"/>
    <property type="evidence" value="ECO:0000250"/>
    <property type="project" value="UniProtKB"/>
</dbReference>
<dbReference type="GO" id="GO:0006357">
    <property type="term" value="P:regulation of transcription by RNA polymerase II"/>
    <property type="evidence" value="ECO:0000318"/>
    <property type="project" value="GO_Central"/>
</dbReference>
<dbReference type="GO" id="GO:0006366">
    <property type="term" value="P:transcription by RNA polymerase II"/>
    <property type="evidence" value="ECO:0000250"/>
    <property type="project" value="UniProtKB"/>
</dbReference>
<dbReference type="FunFam" id="3.30.160.60:FF:000019">
    <property type="entry name" value="GLI family zinc finger 3"/>
    <property type="match status" value="1"/>
</dbReference>
<dbReference type="FunFam" id="3.30.160.60:FF:000031">
    <property type="entry name" value="GLI family zinc finger 3"/>
    <property type="match status" value="1"/>
</dbReference>
<dbReference type="FunFam" id="3.30.160.60:FF:000036">
    <property type="entry name" value="GLI family zinc finger 3"/>
    <property type="match status" value="1"/>
</dbReference>
<dbReference type="FunFam" id="3.30.160.60:FF:000048">
    <property type="entry name" value="GLI family zinc finger 3"/>
    <property type="match status" value="1"/>
</dbReference>
<dbReference type="FunFam" id="3.30.160.60:FF:000453">
    <property type="entry name" value="GLIS family zinc finger 3"/>
    <property type="match status" value="1"/>
</dbReference>
<dbReference type="Gene3D" id="3.30.160.60">
    <property type="entry name" value="Classic Zinc Finger"/>
    <property type="match status" value="5"/>
</dbReference>
<dbReference type="InterPro" id="IPR043359">
    <property type="entry name" value="GLI-like"/>
</dbReference>
<dbReference type="InterPro" id="IPR056436">
    <property type="entry name" value="Znf-C2H2_ZIC1-5/GLI1-3-like"/>
</dbReference>
<dbReference type="InterPro" id="IPR036236">
    <property type="entry name" value="Znf_C2H2_sf"/>
</dbReference>
<dbReference type="InterPro" id="IPR013087">
    <property type="entry name" value="Znf_C2H2_type"/>
</dbReference>
<dbReference type="PANTHER" id="PTHR45718">
    <property type="entry name" value="TRANSCRIPTIONAL ACTIVATOR CUBITUS INTERRUPTUS"/>
    <property type="match status" value="1"/>
</dbReference>
<dbReference type="PANTHER" id="PTHR45718:SF1">
    <property type="entry name" value="ZINC FINGER PROTEIN GLIS3"/>
    <property type="match status" value="1"/>
</dbReference>
<dbReference type="Pfam" id="PF00096">
    <property type="entry name" value="zf-C2H2"/>
    <property type="match status" value="3"/>
</dbReference>
<dbReference type="Pfam" id="PF23561">
    <property type="entry name" value="zf-C2H2_15"/>
    <property type="match status" value="1"/>
</dbReference>
<dbReference type="SMART" id="SM00355">
    <property type="entry name" value="ZnF_C2H2"/>
    <property type="match status" value="5"/>
</dbReference>
<dbReference type="SUPFAM" id="SSF57667">
    <property type="entry name" value="beta-beta-alpha zinc fingers"/>
    <property type="match status" value="3"/>
</dbReference>
<dbReference type="PROSITE" id="PS00028">
    <property type="entry name" value="ZINC_FINGER_C2H2_1"/>
    <property type="match status" value="4"/>
</dbReference>
<dbReference type="PROSITE" id="PS50157">
    <property type="entry name" value="ZINC_FINGER_C2H2_2"/>
    <property type="match status" value="5"/>
</dbReference>
<reference key="1">
    <citation type="journal article" date="2004" name="Nature">
        <title>DNA sequence and analysis of human chromosome 9.</title>
        <authorList>
            <person name="Humphray S.J."/>
            <person name="Oliver K."/>
            <person name="Hunt A.R."/>
            <person name="Plumb R.W."/>
            <person name="Loveland J.E."/>
            <person name="Howe K.L."/>
            <person name="Andrews T.D."/>
            <person name="Searle S."/>
            <person name="Hunt S.E."/>
            <person name="Scott C.E."/>
            <person name="Jones M.C."/>
            <person name="Ainscough R."/>
            <person name="Almeida J.P."/>
            <person name="Ambrose K.D."/>
            <person name="Ashwell R.I.S."/>
            <person name="Babbage A.K."/>
            <person name="Babbage S."/>
            <person name="Bagguley C.L."/>
            <person name="Bailey J."/>
            <person name="Banerjee R."/>
            <person name="Barker D.J."/>
            <person name="Barlow K.F."/>
            <person name="Bates K."/>
            <person name="Beasley H."/>
            <person name="Beasley O."/>
            <person name="Bird C.P."/>
            <person name="Bray-Allen S."/>
            <person name="Brown A.J."/>
            <person name="Brown J.Y."/>
            <person name="Burford D."/>
            <person name="Burrill W."/>
            <person name="Burton J."/>
            <person name="Carder C."/>
            <person name="Carter N.P."/>
            <person name="Chapman J.C."/>
            <person name="Chen Y."/>
            <person name="Clarke G."/>
            <person name="Clark S.Y."/>
            <person name="Clee C.M."/>
            <person name="Clegg S."/>
            <person name="Collier R.E."/>
            <person name="Corby N."/>
            <person name="Crosier M."/>
            <person name="Cummings A.T."/>
            <person name="Davies J."/>
            <person name="Dhami P."/>
            <person name="Dunn M."/>
            <person name="Dutta I."/>
            <person name="Dyer L.W."/>
            <person name="Earthrowl M.E."/>
            <person name="Faulkner L."/>
            <person name="Fleming C.J."/>
            <person name="Frankish A."/>
            <person name="Frankland J.A."/>
            <person name="French L."/>
            <person name="Fricker D.G."/>
            <person name="Garner P."/>
            <person name="Garnett J."/>
            <person name="Ghori J."/>
            <person name="Gilbert J.G.R."/>
            <person name="Glison C."/>
            <person name="Grafham D.V."/>
            <person name="Gribble S."/>
            <person name="Griffiths C."/>
            <person name="Griffiths-Jones S."/>
            <person name="Grocock R."/>
            <person name="Guy J."/>
            <person name="Hall R.E."/>
            <person name="Hammond S."/>
            <person name="Harley J.L."/>
            <person name="Harrison E.S.I."/>
            <person name="Hart E.A."/>
            <person name="Heath P.D."/>
            <person name="Henderson C.D."/>
            <person name="Hopkins B.L."/>
            <person name="Howard P.J."/>
            <person name="Howden P.J."/>
            <person name="Huckle E."/>
            <person name="Johnson C."/>
            <person name="Johnson D."/>
            <person name="Joy A.A."/>
            <person name="Kay M."/>
            <person name="Keenan S."/>
            <person name="Kershaw J.K."/>
            <person name="Kimberley A.M."/>
            <person name="King A."/>
            <person name="Knights A."/>
            <person name="Laird G.K."/>
            <person name="Langford C."/>
            <person name="Lawlor S."/>
            <person name="Leongamornlert D.A."/>
            <person name="Leversha M."/>
            <person name="Lloyd C."/>
            <person name="Lloyd D.M."/>
            <person name="Lovell J."/>
            <person name="Martin S."/>
            <person name="Mashreghi-Mohammadi M."/>
            <person name="Matthews L."/>
            <person name="McLaren S."/>
            <person name="McLay K.E."/>
            <person name="McMurray A."/>
            <person name="Milne S."/>
            <person name="Nickerson T."/>
            <person name="Nisbett J."/>
            <person name="Nordsiek G."/>
            <person name="Pearce A.V."/>
            <person name="Peck A.I."/>
            <person name="Porter K.M."/>
            <person name="Pandian R."/>
            <person name="Pelan S."/>
            <person name="Phillimore B."/>
            <person name="Povey S."/>
            <person name="Ramsey Y."/>
            <person name="Rand V."/>
            <person name="Scharfe M."/>
            <person name="Sehra H.K."/>
            <person name="Shownkeen R."/>
            <person name="Sims S.K."/>
            <person name="Skuce C.D."/>
            <person name="Smith M."/>
            <person name="Steward C.A."/>
            <person name="Swarbreck D."/>
            <person name="Sycamore N."/>
            <person name="Tester J."/>
            <person name="Thorpe A."/>
            <person name="Tracey A."/>
            <person name="Tromans A."/>
            <person name="Thomas D.W."/>
            <person name="Wall M."/>
            <person name="Wallis J.M."/>
            <person name="West A.P."/>
            <person name="Whitehead S.L."/>
            <person name="Willey D.L."/>
            <person name="Williams S.A."/>
            <person name="Wilming L."/>
            <person name="Wray P.W."/>
            <person name="Young L."/>
            <person name="Ashurst J.L."/>
            <person name="Coulson A."/>
            <person name="Blocker H."/>
            <person name="Durbin R.M."/>
            <person name="Sulston J.E."/>
            <person name="Hubbard T."/>
            <person name="Jackson M.J."/>
            <person name="Bentley D.R."/>
            <person name="Beck S."/>
            <person name="Rogers J."/>
            <person name="Dunham I."/>
        </authorList>
    </citation>
    <scope>NUCLEOTIDE SEQUENCE [LARGE SCALE GENOMIC DNA]</scope>
</reference>
<reference key="2">
    <citation type="journal article" date="2004" name="Genome Res.">
        <title>The status, quality, and expansion of the NIH full-length cDNA project: the Mammalian Gene Collection (MGC).</title>
        <authorList>
            <consortium name="The MGC Project Team"/>
        </authorList>
    </citation>
    <scope>NUCLEOTIDE SEQUENCE [LARGE SCALE MRNA] (ISOFORM 1)</scope>
    <scope>VARIANTS PRO-269 AND GLN-301</scope>
    <source>
        <tissue>Testis</tissue>
    </source>
</reference>
<reference key="3">
    <citation type="journal article" date="2006" name="Nat. Genet.">
        <title>Mutations in GLIS3 are responsible for a rare syndrome with neonatal diabetes mellitus and congenital hypothyroidism.</title>
        <authorList>
            <person name="Senee V."/>
            <person name="Chelala C."/>
            <person name="Duchatelet S."/>
            <person name="Feng D."/>
            <person name="Blanc H."/>
            <person name="Cossec J.-C."/>
            <person name="Charon C."/>
            <person name="Nicolino M."/>
            <person name="Boileau P."/>
            <person name="Cavener D.R."/>
            <person name="Bougneres P."/>
            <person name="Taha D."/>
            <person name="Julier C."/>
        </authorList>
    </citation>
    <scope>PARTIAL NUCLEOTIDE SEQUENCE [MRNA] (ISOFORM 2)</scope>
    <scope>INVOLVEMENT IN NDH</scope>
</reference>
<reference key="4">
    <citation type="journal article" date="2003" name="Nucleic Acids Res.">
        <title>GLIS3, a novel member of the GLIS subfamily of Kruppel-like zinc finger proteins with repressor and activation functions.</title>
        <authorList>
            <person name="Kim Y.-S."/>
            <person name="Nakanishi G."/>
            <person name="Lewandoski M."/>
            <person name="Jetten A.M."/>
        </authorList>
    </citation>
    <scope>TISSUE SPECIFICITY</scope>
</reference>
<reference key="5">
    <citation type="journal article" date="2011" name="Eur. J. Endocrinol.">
        <title>Novel GLIS3 mutations demonstrate an extended multisystem phenotype.</title>
        <authorList>
            <person name="Dimitri P."/>
            <person name="Warner J.T."/>
            <person name="Minton J.A."/>
            <person name="Patch A.M."/>
            <person name="Ellard S."/>
            <person name="Hattersley A.T."/>
            <person name="Barr S."/>
            <person name="Hawkes D."/>
            <person name="Wales J.K."/>
            <person name="Gregory J.W."/>
        </authorList>
    </citation>
    <scope>INVOLVEMENT IN NDH</scope>
</reference>
<keyword id="KW-0010">Activator</keyword>
<keyword id="KW-0025">Alternative splicing</keyword>
<keyword id="KW-0984">Congenital hypothyroidism</keyword>
<keyword id="KW-0219">Diabetes mellitus</keyword>
<keyword id="KW-0238">DNA-binding</keyword>
<keyword id="KW-0479">Metal-binding</keyword>
<keyword id="KW-0539">Nucleus</keyword>
<keyword id="KW-1267">Proteomics identification</keyword>
<keyword id="KW-1185">Reference proteome</keyword>
<keyword id="KW-0677">Repeat</keyword>
<keyword id="KW-0678">Repressor</keyword>
<keyword id="KW-0804">Transcription</keyword>
<keyword id="KW-0805">Transcription regulation</keyword>
<keyword id="KW-0862">Zinc</keyword>
<keyword id="KW-0863">Zinc-finger</keyword>
<feature type="chain" id="PRO_0000047211" description="Zinc finger protein GLIS3">
    <location>
        <begin position="1"/>
        <end position="775"/>
    </location>
</feature>
<feature type="zinc finger region" description="C2H2-type 1" evidence="3">
    <location>
        <begin position="345"/>
        <end position="370"/>
    </location>
</feature>
<feature type="zinc finger region" description="C2H2-type 2; atypical" evidence="3">
    <location>
        <begin position="379"/>
        <end position="406"/>
    </location>
</feature>
<feature type="zinc finger region" description="C2H2-type 3" evidence="3">
    <location>
        <begin position="412"/>
        <end position="436"/>
    </location>
</feature>
<feature type="zinc finger region" description="C2H2-type 4" evidence="3">
    <location>
        <begin position="442"/>
        <end position="466"/>
    </location>
</feature>
<feature type="zinc finger region" description="C2H2-type 5" evidence="3">
    <location>
        <begin position="472"/>
        <end position="496"/>
    </location>
</feature>
<feature type="region of interest" description="Disordered" evidence="4">
    <location>
        <begin position="121"/>
        <end position="147"/>
    </location>
</feature>
<feature type="region of interest" description="Disordered" evidence="4">
    <location>
        <begin position="282"/>
        <end position="314"/>
    </location>
</feature>
<feature type="region of interest" description="Disordered" evidence="4">
    <location>
        <begin position="485"/>
        <end position="512"/>
    </location>
</feature>
<feature type="region of interest" description="Disordered" evidence="4">
    <location>
        <begin position="529"/>
        <end position="665"/>
    </location>
</feature>
<feature type="short sequence motif" description="Bipartite nuclear localization signal" evidence="2">
    <location>
        <begin position="491"/>
        <end position="507"/>
    </location>
</feature>
<feature type="compositionally biased region" description="Low complexity" evidence="4">
    <location>
        <begin position="123"/>
        <end position="133"/>
    </location>
</feature>
<feature type="compositionally biased region" description="Basic residues" evidence="4">
    <location>
        <begin position="134"/>
        <end position="147"/>
    </location>
</feature>
<feature type="compositionally biased region" description="Pro residues" evidence="4">
    <location>
        <begin position="289"/>
        <end position="307"/>
    </location>
</feature>
<feature type="compositionally biased region" description="Basic and acidic residues" evidence="4">
    <location>
        <begin position="497"/>
        <end position="512"/>
    </location>
</feature>
<feature type="compositionally biased region" description="Polar residues" evidence="4">
    <location>
        <begin position="557"/>
        <end position="567"/>
    </location>
</feature>
<feature type="compositionally biased region" description="Polar residues" evidence="4">
    <location>
        <begin position="588"/>
        <end position="600"/>
    </location>
</feature>
<feature type="compositionally biased region" description="Polar residues" evidence="4">
    <location>
        <begin position="632"/>
        <end position="663"/>
    </location>
</feature>
<feature type="splice variant" id="VSP_038299" description="In isoform 2." evidence="9">
    <original>M</original>
    <variation>MNGRSCSMSLHRTSGTPQGPRMVSGHHIPAIRAHSGTPGPSPCGSTSSPTMASLANNLHLKMPSGGGMAPQNNVAESRIHLPALSPRRQMLTNGKPRFQVTQAGGMSGSHTLKPKQQEFGSPFPPNPGKGALGFGPQCKSIGKGSCNNLVVTSSPM</variation>
    <location>
        <position position="1"/>
    </location>
</feature>
<feature type="sequence variant" id="VAR_047148" description="In dbSNP:rs806052." evidence="6">
    <original>S</original>
    <variation>P</variation>
    <location>
        <position position="269"/>
    </location>
</feature>
<feature type="sequence variant" id="VAR_031062" description="In dbSNP:rs6415788." evidence="6">
    <original>P</original>
    <variation>Q</variation>
    <location>
        <position position="301"/>
    </location>
</feature>
<feature type="sequence variant" id="VAR_047149" description="In dbSNP:rs10973986.">
    <original>P</original>
    <variation>L</variation>
    <location>
        <position position="578"/>
    </location>
</feature>
<feature type="sequence conflict" description="In Ref. 2; AAH33899." evidence="9" ref="2">
    <original>C</original>
    <variation>Y</variation>
    <location>
        <position position="347"/>
    </location>
</feature>
<gene>
    <name type="primary">GLIS3</name>
    <name type="synonym">ZNF515</name>
</gene>
<proteinExistence type="evidence at protein level"/>
<protein>
    <recommendedName>
        <fullName>Zinc finger protein GLIS3</fullName>
    </recommendedName>
    <alternativeName>
        <fullName>GLI-similar 3</fullName>
    </alternativeName>
    <alternativeName>
        <fullName>Zinc finger protein 515</fullName>
    </alternativeName>
</protein>
<sequence length="775" mass="83636">MMVQRLGLISPPASQVSTACNQISPSLQRAMNAANLNIPPSDTRSLISRESLASTTLSLTESQSASSMKQEWSQGYRALPSLSNHGSQNGLDLGDLLSLPPGTSMSSNSVSNSLPSYLFGTESSHSPYPSPRHSSTRSHSARSKKRALSLSPLSDGIGIDFNTIIRTSPTSLVAYINGSRASPANLSPQPEVYGHFLGVRGSCIPQPRPVPGSQKGVLVAPGGLALPAYGEDGALEHERMQQLEHGGLQPGLVNHMVVQHGLPGPDSQSAGLFKTERLEEFPGSTVDLPPAPPLPPLPPPPGPPPPYHAHAHLHHPELGPHAQQLALPQATLDDDGEMDGIGGKHCCRWIDCSALYDQQEELVRHIEKVHIDQRKGEDFTCFWAGCPRRYKPFNARYKLLIHMRVHSGEKPNKCTFEGCEKAFSRLENLKIHLRSHTGEKPYLCQHPGCQKAFSNSSDRAKHQRTHLDTKPYACQIPGCTKRYTDPSSLRKHVKAHSSKEQQARKKLRSSTELHPDLLTDCLTVQSLQPATSPRDAAAEGTVGRSPGPGPDLYSAPIFSSNYSSRSGTAAGAVPPPHPVSHPSPGHNVQGSPHNPSSQLPPLTAVDAGAERFAPSAPSPHHISPRRVPAPSSILQRTQPPYTQQPSGSHLKSYQPETNSSFQPNGIHVHGFYGQLQKFCPPHYPDSQRIVPPVSSCSVVPSFEDCLVPTSMGQASFDVFHRAFSTHSGITVYDLPSSSSSLFGESLRSGAEDATFLQISTVDRCPSQLSSVYTEG</sequence>
<accession>Q8NEA6</accession>
<accession>B1AL19</accession>
<accession>Q1PHK5</accession>
<comment type="function">
    <text evidence="1">Acts both as a repressor and an activator of transcription. Binds to the consensus sequence 5'-GACCACCCAC-3' (By similarity).</text>
</comment>
<comment type="interaction">
    <interactant intactId="EBI-744456">
        <id>Q8NEA6</id>
    </interactant>
    <interactant intactId="EBI-740595">
        <id>Q9UMX1</id>
        <label>SUFU</label>
    </interactant>
    <organismsDiffer>false</organismsDiffer>
    <experiments>3</experiments>
</comment>
<comment type="interaction">
    <interactant intactId="EBI-12232117">
        <id>Q8NEA6-2</id>
    </interactant>
    <interactant intactId="EBI-747185">
        <id>O95817</id>
        <label>BAG3</label>
    </interactant>
    <organismsDiffer>false</organismsDiffer>
    <experiments>3</experiments>
</comment>
<comment type="interaction">
    <interactant intactId="EBI-12232117">
        <id>Q8NEA6-2</id>
    </interactant>
    <interactant intactId="EBI-372594">
        <id>Q99828</id>
        <label>CIB1</label>
    </interactant>
    <organismsDiffer>false</organismsDiffer>
    <experiments>5</experiments>
</comment>
<comment type="interaction">
    <interactant intactId="EBI-12232117">
        <id>Q8NEA6-2</id>
    </interactant>
    <interactant intactId="EBI-12111050">
        <id>Q3LI64</id>
        <label>KRTAP6-1</label>
    </interactant>
    <organismsDiffer>false</organismsDiffer>
    <experiments>3</experiments>
</comment>
<comment type="interaction">
    <interactant intactId="EBI-12232117">
        <id>Q8NEA6-2</id>
    </interactant>
    <interactant intactId="EBI-11750983">
        <id>Q9HC98-4</id>
        <label>NEK6</label>
    </interactant>
    <organismsDiffer>false</organismsDiffer>
    <experiments>3</experiments>
</comment>
<comment type="interaction">
    <interactant intactId="EBI-12232117">
        <id>Q8NEA6-2</id>
    </interactant>
    <interactant intactId="EBI-359224">
        <id>Q13077</id>
        <label>TRAF1</label>
    </interactant>
    <organismsDiffer>false</organismsDiffer>
    <experiments>3</experiments>
</comment>
<comment type="interaction">
    <interactant intactId="EBI-12232117">
        <id>Q8NEA6-2</id>
    </interactant>
    <interactant intactId="EBI-492476">
        <id>Q96RU7</id>
        <label>TRIB3</label>
    </interactant>
    <organismsDiffer>false</organismsDiffer>
    <experiments>3</experiments>
</comment>
<comment type="interaction">
    <interactant intactId="EBI-12232117">
        <id>Q8NEA6-2</id>
    </interactant>
    <interactant intactId="EBI-742327">
        <id>Q15654</id>
        <label>TRIP6</label>
    </interactant>
    <organismsDiffer>false</organismsDiffer>
    <experiments>3</experiments>
</comment>
<comment type="subcellular location">
    <subcellularLocation>
        <location evidence="1">Nucleus</location>
    </subcellularLocation>
</comment>
<comment type="alternative products">
    <event type="alternative splicing"/>
    <isoform>
        <id>Q8NEA6-1</id>
        <name>1</name>
        <sequence type="displayed"/>
    </isoform>
    <isoform>
        <id>Q8NEA6-2</id>
        <name>2</name>
        <sequence type="described" ref="VSP_038299"/>
    </isoform>
</comment>
<comment type="tissue specificity">
    <text evidence="5">In the adult, expressed at high levels in the kidney and at lower levels in the brain, skeletal muscle, pancreas, liver, lung, thymus and ovary.</text>
</comment>
<comment type="disease" evidence="7 8">
    <disease id="DI-02031">
        <name>Diabetes mellitus, neonatal, with congenital hypothyroidism</name>
        <acronym>NDH</acronym>
        <description>A syndrome of neonatal diabetes syndrome associated with congenital hypothyroidism, congenital glaucoma, hepatic fibrosis and polycystic kidneys.</description>
        <dbReference type="MIM" id="610199"/>
    </disease>
    <text>The disease is caused by variants affecting the gene represented in this entry.</text>
</comment>
<comment type="similarity">
    <text evidence="9">Belongs to the GLI C2H2-type zinc-finger protein family.</text>
</comment>
<organism>
    <name type="scientific">Homo sapiens</name>
    <name type="common">Human</name>
    <dbReference type="NCBI Taxonomy" id="9606"/>
    <lineage>
        <taxon>Eukaryota</taxon>
        <taxon>Metazoa</taxon>
        <taxon>Chordata</taxon>
        <taxon>Craniata</taxon>
        <taxon>Vertebrata</taxon>
        <taxon>Euteleostomi</taxon>
        <taxon>Mammalia</taxon>
        <taxon>Eutheria</taxon>
        <taxon>Euarchontoglires</taxon>
        <taxon>Primates</taxon>
        <taxon>Haplorrhini</taxon>
        <taxon>Catarrhini</taxon>
        <taxon>Hominidae</taxon>
        <taxon>Homo</taxon>
    </lineage>
</organism>